<sequence>MLFSPPLQRATLIQRYKRFLADVITPDGTTLTLHCPNTGAMTGCATPGDTVWYSTSENTKRKYPHTWELTETQFGAFICVNTLRANQLTKEAIQENRLPALAGYNILKSEVKYGAERSRIDFMLQADFRPDCYIEVKSVTLAEKENGYFPDAITERGQKHLRELMGVAAAGHRAVVVFAVLHSAITRFSPARHIDIKYAQLLSEAQNKGVEVLAYKAELSAQKMELNEPVPITL</sequence>
<keyword id="KW-0238">DNA-binding</keyword>
<reference key="1">
    <citation type="journal article" date="2004" name="Nat. Genet.">
        <title>Comparison of genome degradation in Paratyphi A and Typhi, human-restricted serovars of Salmonella enterica that cause typhoid.</title>
        <authorList>
            <person name="McClelland M."/>
            <person name="Sanderson K.E."/>
            <person name="Clifton S.W."/>
            <person name="Latreille P."/>
            <person name="Porwollik S."/>
            <person name="Sabo A."/>
            <person name="Meyer R."/>
            <person name="Bieri T."/>
            <person name="Ozersky P."/>
            <person name="McLellan M."/>
            <person name="Harkins C.R."/>
            <person name="Wang C."/>
            <person name="Nguyen C."/>
            <person name="Berghoff A."/>
            <person name="Elliott G."/>
            <person name="Kohlberg S."/>
            <person name="Strong C."/>
            <person name="Du F."/>
            <person name="Carter J."/>
            <person name="Kremizki C."/>
            <person name="Layman D."/>
            <person name="Leonard S."/>
            <person name="Sun H."/>
            <person name="Fulton L."/>
            <person name="Nash W."/>
            <person name="Miner T."/>
            <person name="Minx P."/>
            <person name="Delehaunty K."/>
            <person name="Fronick C."/>
            <person name="Magrini V."/>
            <person name="Nhan M."/>
            <person name="Warren W."/>
            <person name="Florea L."/>
            <person name="Spieth J."/>
            <person name="Wilson R.K."/>
        </authorList>
    </citation>
    <scope>NUCLEOTIDE SEQUENCE [LARGE SCALE GENOMIC DNA]</scope>
    <source>
        <strain>ATCC 9150 / SARB42</strain>
    </source>
</reference>
<evidence type="ECO:0000255" key="1">
    <source>
        <dbReference type="HAMAP-Rule" id="MF_00095"/>
    </source>
</evidence>
<protein>
    <recommendedName>
        <fullName evidence="1">Sugar fermentation stimulation protein A</fullName>
    </recommendedName>
</protein>
<comment type="function">
    <text evidence="1">Binds to DNA non-specifically. Could be a regulatory factor involved in maltose metabolism.</text>
</comment>
<comment type="similarity">
    <text evidence="1">Belongs to the SfsA family.</text>
</comment>
<organism>
    <name type="scientific">Salmonella paratyphi A (strain ATCC 9150 / SARB42)</name>
    <dbReference type="NCBI Taxonomy" id="295319"/>
    <lineage>
        <taxon>Bacteria</taxon>
        <taxon>Pseudomonadati</taxon>
        <taxon>Pseudomonadota</taxon>
        <taxon>Gammaproteobacteria</taxon>
        <taxon>Enterobacterales</taxon>
        <taxon>Enterobacteriaceae</taxon>
        <taxon>Salmonella</taxon>
    </lineage>
</organism>
<gene>
    <name evidence="1" type="primary">sfsA</name>
    <name type="ordered locus">SPA0193</name>
</gene>
<name>SFSA_SALPA</name>
<accession>Q5PD31</accession>
<feature type="chain" id="PRO_0000152302" description="Sugar fermentation stimulation protein A">
    <location>
        <begin position="1"/>
        <end position="234"/>
    </location>
</feature>
<feature type="DNA-binding region" description="H-T-H motif" evidence="1">
    <location>
        <begin position="201"/>
        <end position="220"/>
    </location>
</feature>
<proteinExistence type="inferred from homology"/>
<dbReference type="EMBL" id="CP000026">
    <property type="protein sequence ID" value="AAV76226.1"/>
    <property type="molecule type" value="Genomic_DNA"/>
</dbReference>
<dbReference type="RefSeq" id="WP_000899408.1">
    <property type="nucleotide sequence ID" value="NC_006511.1"/>
</dbReference>
<dbReference type="SMR" id="Q5PD31"/>
<dbReference type="KEGG" id="spt:SPA0193"/>
<dbReference type="HOGENOM" id="CLU_052299_2_0_6"/>
<dbReference type="Proteomes" id="UP000008185">
    <property type="component" value="Chromosome"/>
</dbReference>
<dbReference type="GO" id="GO:0003677">
    <property type="term" value="F:DNA binding"/>
    <property type="evidence" value="ECO:0007669"/>
    <property type="project" value="UniProtKB-KW"/>
</dbReference>
<dbReference type="CDD" id="cd22359">
    <property type="entry name" value="SfsA-like_bacterial"/>
    <property type="match status" value="1"/>
</dbReference>
<dbReference type="FunFam" id="2.40.50.580:FF:000001">
    <property type="entry name" value="Sugar fermentation stimulation protein A"/>
    <property type="match status" value="1"/>
</dbReference>
<dbReference type="FunFam" id="3.40.1350.60:FF:000001">
    <property type="entry name" value="Sugar fermentation stimulation protein A"/>
    <property type="match status" value="1"/>
</dbReference>
<dbReference type="Gene3D" id="2.40.50.580">
    <property type="match status" value="1"/>
</dbReference>
<dbReference type="Gene3D" id="3.40.1350.60">
    <property type="match status" value="1"/>
</dbReference>
<dbReference type="HAMAP" id="MF_00095">
    <property type="entry name" value="SfsA"/>
    <property type="match status" value="1"/>
</dbReference>
<dbReference type="InterPro" id="IPR005224">
    <property type="entry name" value="SfsA"/>
</dbReference>
<dbReference type="InterPro" id="IPR040452">
    <property type="entry name" value="SfsA_C"/>
</dbReference>
<dbReference type="InterPro" id="IPR041465">
    <property type="entry name" value="SfsA_N"/>
</dbReference>
<dbReference type="NCBIfam" id="TIGR00230">
    <property type="entry name" value="sfsA"/>
    <property type="match status" value="1"/>
</dbReference>
<dbReference type="PANTHER" id="PTHR30545">
    <property type="entry name" value="SUGAR FERMENTATION STIMULATION PROTEIN A"/>
    <property type="match status" value="1"/>
</dbReference>
<dbReference type="PANTHER" id="PTHR30545:SF2">
    <property type="entry name" value="SUGAR FERMENTATION STIMULATION PROTEIN A"/>
    <property type="match status" value="1"/>
</dbReference>
<dbReference type="Pfam" id="PF03749">
    <property type="entry name" value="SfsA"/>
    <property type="match status" value="1"/>
</dbReference>
<dbReference type="Pfam" id="PF17746">
    <property type="entry name" value="SfsA_N"/>
    <property type="match status" value="1"/>
</dbReference>